<name>GFAP_RAT</name>
<accession>P47819</accession>
<accession>A7REI0</accession>
<accession>Q7TQ31</accession>
<accession>Q9R1Q3</accession>
<accession>Q9Z2S0</accession>
<gene>
    <name type="primary">Gfap</name>
</gene>
<sequence>MERRRITSARRSYASSETMVRGHGPTRHLGTIPRLSLSRMTPPLPARVDFSLAGALNAGFKETRASERAEMMELNDRFASYIEKVRFLEQQNKALAAELNQLRAKEPTKLADVYQAELRELRLRLDQLTTNSARLEVERDNLTQDLGTLRQKLQDETNLRLEAENNLAVYRQEADEATLARVDLERKVESLEEEIQFLRKIHEEEVRELQEQLAQQQVHVEMDVAKPDLTAALREIRTQYEAVATSNMQETEEWYRSKFADLTDVASRNAELLRQAKHEANDYRRQLQALTCDLESLRGTNESLERQMREQEERHARESASYQEALARLEEEGQSLKEEMARHLQEYQDLLNVKLALDIEIATYRKLLEGEENRITIPVQTFSNLQIRETSLDTKSVSEGHLKRNIVVKTVEMRDGEVIKESKQEHKDVM</sequence>
<protein>
    <recommendedName>
        <fullName>Glial fibrillary acidic protein</fullName>
        <shortName>GFAP</shortName>
    </recommendedName>
</protein>
<feature type="chain" id="PRO_0000063807" description="Glial fibrillary acidic protein">
    <location>
        <begin position="1"/>
        <end position="430"/>
    </location>
</feature>
<feature type="domain" description="IF rod" evidence="4">
    <location>
        <begin position="67"/>
        <end position="375"/>
    </location>
</feature>
<feature type="region of interest" description="Head">
    <location>
        <begin position="1"/>
        <end position="70"/>
    </location>
</feature>
<feature type="region of interest" description="Disordered" evidence="5">
    <location>
        <begin position="1"/>
        <end position="31"/>
    </location>
</feature>
<feature type="region of interest" description="Coil 1A">
    <location>
        <begin position="71"/>
        <end position="102"/>
    </location>
</feature>
<feature type="region of interest" description="Linker 1">
    <location>
        <begin position="103"/>
        <end position="113"/>
    </location>
</feature>
<feature type="region of interest" description="Coil 1B">
    <location>
        <begin position="114"/>
        <end position="212"/>
    </location>
</feature>
<feature type="region of interest" description="Linker 12">
    <location>
        <begin position="213"/>
        <end position="228"/>
    </location>
</feature>
<feature type="region of interest" description="Coil 2A">
    <location>
        <begin position="229"/>
        <end position="250"/>
    </location>
</feature>
<feature type="region of interest" description="Linker 2">
    <location>
        <begin position="251"/>
        <end position="254"/>
    </location>
</feature>
<feature type="region of interest" description="Coil 2B">
    <location>
        <begin position="255"/>
        <end position="375"/>
    </location>
</feature>
<feature type="region of interest" description="Tail">
    <location>
        <begin position="376"/>
        <end position="430"/>
    </location>
</feature>
<feature type="compositionally biased region" description="Polar residues" evidence="5">
    <location>
        <begin position="9"/>
        <end position="18"/>
    </location>
</feature>
<feature type="modified residue" description="Phosphothreonine; by AURKB and ROCK1" evidence="3">
    <location>
        <position position="7"/>
    </location>
</feature>
<feature type="modified residue" description="Omega-N-methylarginine" evidence="2">
    <location>
        <position position="11"/>
    </location>
</feature>
<feature type="modified residue" description="Phosphoserine" evidence="12">
    <location>
        <position position="12"/>
    </location>
</feature>
<feature type="modified residue" description="Omega-N-methylarginine" evidence="2">
    <location>
        <position position="21"/>
    </location>
</feature>
<feature type="modified residue" description="Citrulline" evidence="1">
    <location>
        <position position="34"/>
    </location>
</feature>
<feature type="modified residue" description="Phosphoserine; by AURKB and ROCK1" evidence="3">
    <location>
        <position position="36"/>
    </location>
</feature>
<feature type="modified residue" description="Phosphothreonine" evidence="2">
    <location>
        <position position="41"/>
    </location>
</feature>
<feature type="modified residue" description="Phosphoserine" evidence="12">
    <location>
        <position position="80"/>
    </location>
</feature>
<feature type="modified residue" description="Phosphothreonine" evidence="8">
    <location>
        <position position="108"/>
    </location>
</feature>
<feature type="modified residue" description="Phosphothreonine" evidence="12">
    <location>
        <position position="148"/>
    </location>
</feature>
<feature type="modified residue" description="Phosphoserine" evidence="12">
    <location>
        <position position="267"/>
    </location>
</feature>
<feature type="modified residue" description="Citrulline" evidence="1">
    <location>
        <position position="268"/>
    </location>
</feature>
<feature type="modified residue" description="Phosphoserine" evidence="12">
    <location>
        <position position="321"/>
    </location>
</feature>
<feature type="modified residue" description="Phosphothreonine" evidence="8">
    <location>
        <position position="381"/>
    </location>
</feature>
<feature type="modified residue" description="Phosphoserine" evidence="12">
    <location>
        <position position="383"/>
    </location>
</feature>
<feature type="modified residue" description="Citrulline" evidence="1">
    <location>
        <position position="404"/>
    </location>
</feature>
<feature type="modified residue" description="Citrulline" evidence="1">
    <location>
        <position position="414"/>
    </location>
</feature>
<feature type="splice variant" id="VSP_017054" description="In isoform 2." evidence="11">
    <original>ETSLDTKSVSEGHLKRNIVVKTVEMRDGEVIKESKQEHKDVM</original>
    <variation>GGKSTKEGEGHKVTRHLKRLTIQVIPIQALARL</variation>
    <location>
        <begin position="389"/>
        <end position="430"/>
    </location>
</feature>
<feature type="splice variant" id="VSP_061021" description="In isoform 3.">
    <original>ETSLDTKSVSEGHLKRNIVVK</original>
    <variation>GQYSGALWERVMNPLPPPPGL</variation>
    <location>
        <begin position="389"/>
        <end position="409"/>
    </location>
</feature>
<feature type="splice variant" id="VSP_061022" description="In isoform 3.">
    <location>
        <begin position="410"/>
        <end position="430"/>
    </location>
</feature>
<feature type="sequence conflict" description="In Ref. 1; AAA20540." evidence="11" ref="1">
    <original>L</original>
    <variation>V</variation>
    <location>
        <position position="273"/>
    </location>
</feature>
<dbReference type="EMBL" id="U03700">
    <property type="protein sequence ID" value="AAA20540.1"/>
    <property type="molecule type" value="mRNA"/>
</dbReference>
<dbReference type="EMBL" id="AF028784">
    <property type="protein sequence ID" value="AAD01873.1"/>
    <property type="molecule type" value="Genomic_DNA"/>
</dbReference>
<dbReference type="EMBL" id="AF028784">
    <property type="protein sequence ID" value="AAD01874.2"/>
    <property type="molecule type" value="Genomic_DNA"/>
</dbReference>
<dbReference type="EMBL" id="BC088851">
    <property type="protein sequence ID" value="AAH88851.1"/>
    <property type="molecule type" value="mRNA"/>
</dbReference>
<dbReference type="EMBL" id="Z48978">
    <property type="protein sequence ID" value="CAA88842.1"/>
    <property type="molecule type" value="Genomic_DNA"/>
</dbReference>
<dbReference type="EMBL" id="DQ979831">
    <property type="protein sequence ID" value="ABL14185.1"/>
    <property type="molecule type" value="mRNA"/>
</dbReference>
<dbReference type="EMBL" id="AY142198">
    <property type="protein sequence ID" value="AAN87911.1"/>
    <property type="molecule type" value="Genomic_DNA"/>
</dbReference>
<dbReference type="PIR" id="I56572">
    <property type="entry name" value="I56572"/>
</dbReference>
<dbReference type="RefSeq" id="NP_058705.2">
    <molecule id="P47819-1"/>
    <property type="nucleotide sequence ID" value="NM_017009.2"/>
</dbReference>
<dbReference type="SMR" id="P47819"/>
<dbReference type="BioGRID" id="246558">
    <property type="interactions" value="5"/>
</dbReference>
<dbReference type="FunCoup" id="P47819">
    <property type="interactions" value="251"/>
</dbReference>
<dbReference type="IntAct" id="P47819">
    <property type="interactions" value="5"/>
</dbReference>
<dbReference type="MINT" id="P47819"/>
<dbReference type="STRING" id="10116.ENSRNOP00000032389"/>
<dbReference type="iPTMnet" id="P47819"/>
<dbReference type="PhosphoSitePlus" id="P47819"/>
<dbReference type="SwissPalm" id="P47819"/>
<dbReference type="jPOST" id="P47819"/>
<dbReference type="PaxDb" id="10116-ENSRNOP00000032389"/>
<dbReference type="ABCD" id="P47819">
    <property type="antibodies" value="2 sequenced antibodies"/>
</dbReference>
<dbReference type="Ensembl" id="ENSRNOT00000034401.6">
    <molecule id="P47819-1"/>
    <property type="protein sequence ID" value="ENSRNOP00000032389.2"/>
    <property type="gene ID" value="ENSRNOG00000002919.10"/>
</dbReference>
<dbReference type="Ensembl" id="ENSRNOT00000093266.2">
    <molecule id="P47819-2"/>
    <property type="protein sequence ID" value="ENSRNOP00000076226.2"/>
    <property type="gene ID" value="ENSRNOG00000002919.10"/>
</dbReference>
<dbReference type="GeneID" id="24387"/>
<dbReference type="KEGG" id="rno:24387"/>
<dbReference type="UCSC" id="RGD:2679">
    <molecule id="P47819-1"/>
    <property type="organism name" value="rat"/>
</dbReference>
<dbReference type="AGR" id="RGD:2679"/>
<dbReference type="CTD" id="2670"/>
<dbReference type="RGD" id="2679">
    <property type="gene designation" value="Gfap"/>
</dbReference>
<dbReference type="eggNOG" id="ENOG502RKU6">
    <property type="taxonomic scope" value="Eukaryota"/>
</dbReference>
<dbReference type="GeneTree" id="ENSGT00940000159539"/>
<dbReference type="HOGENOM" id="CLU_012560_7_4_1"/>
<dbReference type="InParanoid" id="P47819"/>
<dbReference type="OMA" id="QYETMAT"/>
<dbReference type="OrthoDB" id="2441647at2759"/>
<dbReference type="PhylomeDB" id="P47819"/>
<dbReference type="PRO" id="PR:P47819"/>
<dbReference type="Proteomes" id="UP000002494">
    <property type="component" value="Chromosome 10"/>
</dbReference>
<dbReference type="Bgee" id="ENSRNOG00000002919">
    <property type="expression patterns" value="Expressed in Ammon's horn and 14 other cell types or tissues"/>
</dbReference>
<dbReference type="ExpressionAtlas" id="P47819">
    <property type="expression patterns" value="baseline and differential"/>
</dbReference>
<dbReference type="GO" id="GO:0097450">
    <property type="term" value="C:astrocyte end-foot"/>
    <property type="evidence" value="ECO:0000266"/>
    <property type="project" value="RGD"/>
</dbReference>
<dbReference type="GO" id="GO:0097449">
    <property type="term" value="C:astrocyte projection"/>
    <property type="evidence" value="ECO:0000314"/>
    <property type="project" value="MGI"/>
</dbReference>
<dbReference type="GO" id="GO:0044297">
    <property type="term" value="C:cell body"/>
    <property type="evidence" value="ECO:0000266"/>
    <property type="project" value="RGD"/>
</dbReference>
<dbReference type="GO" id="GO:0042995">
    <property type="term" value="C:cell projection"/>
    <property type="evidence" value="ECO:0000266"/>
    <property type="project" value="RGD"/>
</dbReference>
<dbReference type="GO" id="GO:0005737">
    <property type="term" value="C:cytoplasm"/>
    <property type="evidence" value="ECO:0000266"/>
    <property type="project" value="RGD"/>
</dbReference>
<dbReference type="GO" id="GO:0098574">
    <property type="term" value="C:cytoplasmic side of lysosomal membrane"/>
    <property type="evidence" value="ECO:0000314"/>
    <property type="project" value="ParkinsonsUK-UCL"/>
</dbReference>
<dbReference type="GO" id="GO:0005856">
    <property type="term" value="C:cytoskeleton"/>
    <property type="evidence" value="ECO:0000266"/>
    <property type="project" value="RGD"/>
</dbReference>
<dbReference type="GO" id="GO:0097386">
    <property type="term" value="C:glial cell projection"/>
    <property type="evidence" value="ECO:0000266"/>
    <property type="project" value="RGD"/>
</dbReference>
<dbReference type="GO" id="GO:0005882">
    <property type="term" value="C:intermediate filament"/>
    <property type="evidence" value="ECO:0000266"/>
    <property type="project" value="RGD"/>
</dbReference>
<dbReference type="GO" id="GO:0005765">
    <property type="term" value="C:lysosomal membrane"/>
    <property type="evidence" value="ECO:0000304"/>
    <property type="project" value="Reactome"/>
</dbReference>
<dbReference type="GO" id="GO:0005764">
    <property type="term" value="C:lysosome"/>
    <property type="evidence" value="ECO:0000266"/>
    <property type="project" value="RGD"/>
</dbReference>
<dbReference type="GO" id="GO:0016020">
    <property type="term" value="C:membrane"/>
    <property type="evidence" value="ECO:0000266"/>
    <property type="project" value="RGD"/>
</dbReference>
<dbReference type="GO" id="GO:0042802">
    <property type="term" value="F:identical protein binding"/>
    <property type="evidence" value="ECO:0000266"/>
    <property type="project" value="RGD"/>
</dbReference>
<dbReference type="GO" id="GO:0005178">
    <property type="term" value="F:integrin binding"/>
    <property type="evidence" value="ECO:0000314"/>
    <property type="project" value="MGI"/>
</dbReference>
<dbReference type="GO" id="GO:0019900">
    <property type="term" value="F:kinase binding"/>
    <property type="evidence" value="ECO:0000353"/>
    <property type="project" value="RGD"/>
</dbReference>
<dbReference type="GO" id="GO:0005200">
    <property type="term" value="F:structural constituent of cytoskeleton"/>
    <property type="evidence" value="ECO:0000314"/>
    <property type="project" value="RGD"/>
</dbReference>
<dbReference type="GO" id="GO:0014002">
    <property type="term" value="P:astrocyte development"/>
    <property type="evidence" value="ECO:0000266"/>
    <property type="project" value="RGD"/>
</dbReference>
<dbReference type="GO" id="GO:0060020">
    <property type="term" value="P:Bergmann glial cell differentiation"/>
    <property type="evidence" value="ECO:0000266"/>
    <property type="project" value="RGD"/>
</dbReference>
<dbReference type="GO" id="GO:0070779">
    <property type="term" value="P:D-aspartate import across plasma membrane"/>
    <property type="evidence" value="ECO:0000266"/>
    <property type="project" value="RGD"/>
</dbReference>
<dbReference type="GO" id="GO:0030198">
    <property type="term" value="P:extracellular matrix organization"/>
    <property type="evidence" value="ECO:0000266"/>
    <property type="project" value="RGD"/>
</dbReference>
<dbReference type="GO" id="GO:0010467">
    <property type="term" value="P:gene expression"/>
    <property type="evidence" value="ECO:0000266"/>
    <property type="project" value="RGD"/>
</dbReference>
<dbReference type="GO" id="GO:0045109">
    <property type="term" value="P:intermediate filament organization"/>
    <property type="evidence" value="ECO:0000250"/>
    <property type="project" value="UniProtKB"/>
</dbReference>
<dbReference type="GO" id="GO:0045103">
    <property type="term" value="P:intermediate filament-based process"/>
    <property type="evidence" value="ECO:0000266"/>
    <property type="project" value="RGD"/>
</dbReference>
<dbReference type="GO" id="GO:0006886">
    <property type="term" value="P:intracellular protein transport"/>
    <property type="evidence" value="ECO:0000266"/>
    <property type="project" value="RGD"/>
</dbReference>
<dbReference type="GO" id="GO:0060291">
    <property type="term" value="P:long-term synaptic potentiation"/>
    <property type="evidence" value="ECO:0000266"/>
    <property type="project" value="RGD"/>
</dbReference>
<dbReference type="GO" id="GO:0010977">
    <property type="term" value="P:negative regulation of neuron projection development"/>
    <property type="evidence" value="ECO:0000266"/>
    <property type="project" value="RGD"/>
</dbReference>
<dbReference type="GO" id="GO:0031175">
    <property type="term" value="P:neuron projection development"/>
    <property type="evidence" value="ECO:0000266"/>
    <property type="project" value="RGD"/>
</dbReference>
<dbReference type="GO" id="GO:0031102">
    <property type="term" value="P:neuron projection regeneration"/>
    <property type="evidence" value="ECO:0000266"/>
    <property type="project" value="RGD"/>
</dbReference>
<dbReference type="GO" id="GO:0060252">
    <property type="term" value="P:positive regulation of glial cell proliferation"/>
    <property type="evidence" value="ECO:0000315"/>
    <property type="project" value="RGD"/>
</dbReference>
<dbReference type="GO" id="GO:0010625">
    <property type="term" value="P:positive regulation of Schwann cell proliferation"/>
    <property type="evidence" value="ECO:0000266"/>
    <property type="project" value="RGD"/>
</dbReference>
<dbReference type="GO" id="GO:1904714">
    <property type="term" value="P:regulation of chaperone-mediated autophagy"/>
    <property type="evidence" value="ECO:0000315"/>
    <property type="project" value="ParkinsonsUK-UCL"/>
</dbReference>
<dbReference type="GO" id="GO:0051580">
    <property type="term" value="P:regulation of neurotransmitter uptake"/>
    <property type="evidence" value="ECO:0000266"/>
    <property type="project" value="RGD"/>
</dbReference>
<dbReference type="GO" id="GO:0014010">
    <property type="term" value="P:Schwann cell proliferation"/>
    <property type="evidence" value="ECO:0000266"/>
    <property type="project" value="RGD"/>
</dbReference>
<dbReference type="FunFam" id="1.20.5.1160:FF:000001">
    <property type="entry name" value="Keratin type II"/>
    <property type="match status" value="1"/>
</dbReference>
<dbReference type="FunFam" id="1.20.5.170:FF:000002">
    <property type="entry name" value="Type I keratin KA11"/>
    <property type="match status" value="1"/>
</dbReference>
<dbReference type="FunFam" id="1.20.5.500:FF:000001">
    <property type="entry name" value="Type II keratin 23"/>
    <property type="match status" value="1"/>
</dbReference>
<dbReference type="Gene3D" id="1.20.5.170">
    <property type="match status" value="1"/>
</dbReference>
<dbReference type="Gene3D" id="1.20.5.500">
    <property type="entry name" value="Single helix bin"/>
    <property type="match status" value="1"/>
</dbReference>
<dbReference type="Gene3D" id="1.20.5.1160">
    <property type="entry name" value="Vasodilator-stimulated phosphoprotein"/>
    <property type="match status" value="1"/>
</dbReference>
<dbReference type="InterPro" id="IPR018039">
    <property type="entry name" value="IF_conserved"/>
</dbReference>
<dbReference type="InterPro" id="IPR039008">
    <property type="entry name" value="IF_rod_dom"/>
</dbReference>
<dbReference type="InterPro" id="IPR006821">
    <property type="entry name" value="Intermed_filament_DNA-bd"/>
</dbReference>
<dbReference type="InterPro" id="IPR050405">
    <property type="entry name" value="Intermediate_filament"/>
</dbReference>
<dbReference type="PANTHER" id="PTHR45652">
    <property type="entry name" value="GLIAL FIBRILLARY ACIDIC PROTEIN"/>
    <property type="match status" value="1"/>
</dbReference>
<dbReference type="PANTHER" id="PTHR45652:SF9">
    <property type="entry name" value="GLIAL FIBRILLARY ACIDIC PROTEIN"/>
    <property type="match status" value="1"/>
</dbReference>
<dbReference type="Pfam" id="PF00038">
    <property type="entry name" value="Filament"/>
    <property type="match status" value="1"/>
</dbReference>
<dbReference type="Pfam" id="PF04732">
    <property type="entry name" value="Filament_head"/>
    <property type="match status" value="1"/>
</dbReference>
<dbReference type="SMART" id="SM01391">
    <property type="entry name" value="Filament"/>
    <property type="match status" value="1"/>
</dbReference>
<dbReference type="SUPFAM" id="SSF64593">
    <property type="entry name" value="Intermediate filament protein, coiled coil region"/>
    <property type="match status" value="2"/>
</dbReference>
<dbReference type="PROSITE" id="PS00226">
    <property type="entry name" value="IF_ROD_1"/>
    <property type="match status" value="1"/>
</dbReference>
<dbReference type="PROSITE" id="PS51842">
    <property type="entry name" value="IF_ROD_2"/>
    <property type="match status" value="1"/>
</dbReference>
<proteinExistence type="evidence at protein level"/>
<reference key="1">
    <citation type="journal article" date="1992" name="J. Neurosci. Res.">
        <title>Isolation of cDNA clones encoding rat glial fibrillary acidic protein: expression in astrocytes and in Schwann cells.</title>
        <authorList>
            <person name="Feinstein D.L."/>
            <person name="Weinmaster G.A."/>
            <person name="Milner R.J."/>
        </authorList>
    </citation>
    <scope>NUCLEOTIDE SEQUENCE [MRNA] (ISOFORM 1)</scope>
    <source>
        <strain>Sprague-Dawley</strain>
    </source>
</reference>
<reference key="2">
    <citation type="journal article" date="1999" name="J. Neurosci. Res.">
        <title>Structural features of the rat GFAP gene and identification of a novel alternative transcript.</title>
        <authorList>
            <person name="Condorelli D.F."/>
            <person name="Nicoletti V.G."/>
            <person name="Barresi V."/>
            <person name="Conticello S.G."/>
            <person name="Caruso A."/>
            <person name="Tendi E.A."/>
            <person name="Giuffrida Stella A.M."/>
        </authorList>
    </citation>
    <scope>NUCLEOTIDE SEQUENCE [GENOMIC DNA] (ISOFORM 2)</scope>
    <scope>ALTERNATIVE SPLICING</scope>
</reference>
<reference key="3">
    <citation type="journal article" date="2004" name="Genome Res.">
        <title>The status, quality, and expansion of the NIH full-length cDNA project: the Mammalian Gene Collection (MGC).</title>
        <authorList>
            <consortium name="The MGC Project Team"/>
        </authorList>
    </citation>
    <scope>NUCLEOTIDE SEQUENCE [LARGE SCALE MRNA] (ISOFORM 1)</scope>
    <source>
        <tissue>Brain</tissue>
    </source>
</reference>
<reference key="4">
    <citation type="journal article" date="1994" name="J. Neurosci. Res.">
        <title>Tissue-specific DNA methylation patterns of the rat glial fibrillary acidic protein gene.</title>
        <authorList>
            <person name="Condorelli D.F."/>
            <person name="Nicoletti V.G."/>
            <person name="Barresi V."/>
            <person name="Caruso A."/>
            <person name="Conticello S."/>
            <person name="de Vellis J."/>
            <person name="Giuffrida-Stella A."/>
        </authorList>
    </citation>
    <scope>NUCLEOTIDE SEQUENCE [MRNA] OF 1-152</scope>
    <source>
        <tissue>Liver</tissue>
    </source>
</reference>
<reference key="5">
    <citation type="journal article" date="2007" name="Glia">
        <title>Identification and characterization of GFAPkappa, a novel glial fibrillary acidic protein isoform.</title>
        <authorList>
            <person name="Blechingberg J."/>
            <person name="Holm I.E."/>
            <person name="Nielsen K.B."/>
            <person name="Jensen T.H."/>
            <person name="Joergensen A.L."/>
            <person name="Nielsen A.L."/>
        </authorList>
    </citation>
    <scope>NUCLEOTIDE SEQUENCE [MRNA] OF 375-430 (ISOFORM 3)</scope>
</reference>
<reference key="6">
    <citation type="journal article" date="2003" name="Genomics">
        <title>Genetic polymorphism and sequence evolution of an alternatively spliced exon of the glial fibrillary acidic protein gene, GFAP.</title>
        <authorList>
            <person name="Singh R."/>
            <person name="Nielsen A.L."/>
            <person name="Johansen M.G."/>
            <person name="Jorgensen A.L."/>
        </authorList>
    </citation>
    <scope>NUCLEOTIDE SEQUENCE [GENOMIC DNA] OF 389-421 (ISOFORM 2)</scope>
</reference>
<reference key="7">
    <citation type="submission" date="2007-09" db="UniProtKB">
        <authorList>
            <person name="Lubec G."/>
            <person name="Afjehi-Sadat L."/>
            <person name="Diao W."/>
            <person name="Kang S.U."/>
            <person name="Lubec S."/>
        </authorList>
    </citation>
    <scope>PROTEIN SEQUENCE OF 11-21; 28-68; 87-93; 110-119; 123-150; 161-171; 188-199; 208-234; 238-256; 259-274; 286-298; 318-365; 375-388; 396-403 AND 410-429</scope>
    <scope>PARTIAL PROTEIN SEQUENCE (ISOFORM 2)</scope>
    <scope>IDENTIFICATION BY MASS SPECTROMETRY</scope>
    <source>
        <strain>Sprague-Dawley</strain>
        <tissue>Brain</tissue>
        <tissue>Hippocampus</tissue>
        <tissue>Spinal cord</tissue>
    </source>
</reference>
<reference key="8">
    <citation type="journal article" date="1990" name="Brain Res. Mol. Brain Res.">
        <title>Messenger RNA for glial fibrillary acidic protein is decreased in rat brain following acute and chronic corticosterone treatment.</title>
        <authorList>
            <person name="Nichols N.R."/>
            <person name="Osterburg H.H."/>
            <person name="Masters J.N."/>
            <person name="Millar S.L."/>
            <person name="Finch C.E."/>
        </authorList>
    </citation>
    <scope>TISSUE SPECIFICITY</scope>
</reference>
<reference key="9">
    <citation type="submission" date="2007-02" db="UniProtKB">
        <authorList>
            <person name="Lubec G."/>
            <person name="Chen W.-Q."/>
        </authorList>
    </citation>
    <scope>PHOSPHORYLATION AT THR-108 AND THR-381</scope>
    <scope>IDENTIFICATION BY MASS SPECTROMETRY</scope>
</reference>
<reference key="10">
    <citation type="journal article" date="2012" name="Nat. Commun.">
        <title>Quantitative maps of protein phosphorylation sites across 14 different rat organs and tissues.</title>
        <authorList>
            <person name="Lundby A."/>
            <person name="Secher A."/>
            <person name="Lage K."/>
            <person name="Nordsborg N.B."/>
            <person name="Dmytriyev A."/>
            <person name="Lundby C."/>
            <person name="Olsen J.V."/>
        </authorList>
    </citation>
    <scope>PHOSPHORYLATION [LARGE SCALE ANALYSIS] AT SER-12; SER-80; THR-148; SER-267; SER-321 AND SER-383</scope>
    <scope>IDENTIFICATION BY MASS SPECTROMETRY [LARGE SCALE ANALYSIS]</scope>
</reference>
<comment type="function">
    <text>GFAP, a class-III intermediate filament, is a cell-specific marker that, during the development of the central nervous system, distinguishes astrocytes from other glial cells.</text>
</comment>
<comment type="subunit">
    <text evidence="2">Interacts with SYNM.</text>
</comment>
<comment type="subunit">
    <molecule>Isoform 2</molecule>
    <text evidence="3">Interacts with PSEN1 (via N-terminus).</text>
</comment>
<comment type="subcellular location">
    <subcellularLocation>
        <location evidence="3">Cytoplasm</location>
    </subcellularLocation>
    <text evidence="3">Associated with intermediate filaments.</text>
</comment>
<comment type="alternative products">
    <event type="alternative splicing"/>
    <isoform>
        <id>P47819-1</id>
        <name>1</name>
        <name evidence="10">GFAP alpha</name>
        <sequence type="displayed"/>
    </isoform>
    <isoform>
        <id>P47819-2</id>
        <name>2</name>
        <name evidence="6">GFAP delta</name>
        <name evidence="9">GFAP epsilon</name>
        <sequence type="described" ref="VSP_017054"/>
    </isoform>
    <isoform>
        <id>P47819-3</id>
        <name>3</name>
        <name evidence="10">GFAP kappa</name>
        <sequence type="described" ref="VSP_061021 VSP_061022"/>
    </isoform>
</comment>
<comment type="tissue specificity">
    <text evidence="7">Expressed in the cortex and hippocampus. Expression decreases following acute and chronic corticosterone treatment.</text>
</comment>
<comment type="PTM">
    <text evidence="3">Phosphorylated by PKN1.</text>
</comment>
<comment type="similarity">
    <text evidence="4">Belongs to the intermediate filament family.</text>
</comment>
<keyword id="KW-0025">Alternative splicing</keyword>
<keyword id="KW-0164">Citrullination</keyword>
<keyword id="KW-0175">Coiled coil</keyword>
<keyword id="KW-0963">Cytoplasm</keyword>
<keyword id="KW-0903">Direct protein sequencing</keyword>
<keyword id="KW-0403">Intermediate filament</keyword>
<keyword id="KW-0488">Methylation</keyword>
<keyword id="KW-0597">Phosphoprotein</keyword>
<keyword id="KW-1185">Reference proteome</keyword>
<organism>
    <name type="scientific">Rattus norvegicus</name>
    <name type="common">Rat</name>
    <dbReference type="NCBI Taxonomy" id="10116"/>
    <lineage>
        <taxon>Eukaryota</taxon>
        <taxon>Metazoa</taxon>
        <taxon>Chordata</taxon>
        <taxon>Craniata</taxon>
        <taxon>Vertebrata</taxon>
        <taxon>Euteleostomi</taxon>
        <taxon>Mammalia</taxon>
        <taxon>Eutheria</taxon>
        <taxon>Euarchontoglires</taxon>
        <taxon>Glires</taxon>
        <taxon>Rodentia</taxon>
        <taxon>Myomorpha</taxon>
        <taxon>Muroidea</taxon>
        <taxon>Muridae</taxon>
        <taxon>Murinae</taxon>
        <taxon>Rattus</taxon>
    </lineage>
</organism>
<evidence type="ECO:0000250" key="1"/>
<evidence type="ECO:0000250" key="2">
    <source>
        <dbReference type="UniProtKB" id="P03995"/>
    </source>
</evidence>
<evidence type="ECO:0000250" key="3">
    <source>
        <dbReference type="UniProtKB" id="P14136"/>
    </source>
</evidence>
<evidence type="ECO:0000255" key="4">
    <source>
        <dbReference type="PROSITE-ProRule" id="PRU01188"/>
    </source>
</evidence>
<evidence type="ECO:0000256" key="5">
    <source>
        <dbReference type="SAM" id="MobiDB-lite"/>
    </source>
</evidence>
<evidence type="ECO:0000269" key="6">
    <source>
    </source>
</evidence>
<evidence type="ECO:0000269" key="7">
    <source>
    </source>
</evidence>
<evidence type="ECO:0000269" key="8">
    <source ref="9"/>
</evidence>
<evidence type="ECO:0000303" key="9">
    <source>
    </source>
</evidence>
<evidence type="ECO:0000303" key="10">
    <source>
    </source>
</evidence>
<evidence type="ECO:0000305" key="11"/>
<evidence type="ECO:0007744" key="12">
    <source>
    </source>
</evidence>